<feature type="chain" id="PRO_1000066846" description="UPF0229 protein BALH_0490">
    <location>
        <begin position="1"/>
        <end position="391"/>
    </location>
</feature>
<feature type="region of interest" description="Disordered" evidence="2">
    <location>
        <begin position="1"/>
        <end position="31"/>
    </location>
</feature>
<feature type="region of interest" description="Disordered" evidence="2">
    <location>
        <begin position="80"/>
        <end position="117"/>
    </location>
</feature>
<feature type="compositionally biased region" description="Polar residues" evidence="2">
    <location>
        <begin position="1"/>
        <end position="16"/>
    </location>
</feature>
<feature type="compositionally biased region" description="Basic and acidic residues" evidence="2">
    <location>
        <begin position="21"/>
        <end position="31"/>
    </location>
</feature>
<feature type="compositionally biased region" description="Gly residues" evidence="2">
    <location>
        <begin position="98"/>
        <end position="115"/>
    </location>
</feature>
<accession>A0R9J0</accession>
<evidence type="ECO:0000255" key="1">
    <source>
        <dbReference type="HAMAP-Rule" id="MF_01232"/>
    </source>
</evidence>
<evidence type="ECO:0000256" key="2">
    <source>
        <dbReference type="SAM" id="MobiDB-lite"/>
    </source>
</evidence>
<name>Y490_BACAH</name>
<organism>
    <name type="scientific">Bacillus thuringiensis (strain Al Hakam)</name>
    <dbReference type="NCBI Taxonomy" id="412694"/>
    <lineage>
        <taxon>Bacteria</taxon>
        <taxon>Bacillati</taxon>
        <taxon>Bacillota</taxon>
        <taxon>Bacilli</taxon>
        <taxon>Bacillales</taxon>
        <taxon>Bacillaceae</taxon>
        <taxon>Bacillus</taxon>
        <taxon>Bacillus cereus group</taxon>
    </lineage>
</organism>
<sequence length="391" mass="45314">MGEENQPNYTISQENWSLHRKGYDDQQRHQEKVQEAIKNNLPDLVTEESIVMSNGKDVVKIPIRSLDEYKIRYNYDKNKHVGQGNGDSKVGDVVARDGSGGQKQKGPGKGQGAGDAAGEDYYEAEVSILELEQAFFKELELPNLKRKEMDENRIEHVEFNDIRKTGLWGNIDKKRTMISAYKRNAMRGKASFHPIHQEDLKFRTWNEVLKPDSKAVVLAMMDTSGSMGIWEKYMARSFFFWMTRFLRTKYETVDIEFIAHHTEAKVVPEEEFFSKGESGGTICSSVYKKALELIDNKYSPDRYNIYPFHFSDGDNLTSDNARCVKLVEELMKKCNMFGYGEVNQYNRHSTLMSAYKNIKDENFRYYILKQKADVFHAMKSFFREESGEKMA</sequence>
<gene>
    <name type="ordered locus">BALH_0490</name>
</gene>
<reference key="1">
    <citation type="journal article" date="2007" name="J. Bacteriol.">
        <title>The complete genome sequence of Bacillus thuringiensis Al Hakam.</title>
        <authorList>
            <person name="Challacombe J.F."/>
            <person name="Altherr M.R."/>
            <person name="Xie G."/>
            <person name="Bhotika S.S."/>
            <person name="Brown N."/>
            <person name="Bruce D."/>
            <person name="Campbell C.S."/>
            <person name="Campbell M.L."/>
            <person name="Chen J."/>
            <person name="Chertkov O."/>
            <person name="Cleland C."/>
            <person name="Dimitrijevic M."/>
            <person name="Doggett N.A."/>
            <person name="Fawcett J.J."/>
            <person name="Glavina T."/>
            <person name="Goodwin L.A."/>
            <person name="Green L.D."/>
            <person name="Han C.S."/>
            <person name="Hill K.K."/>
            <person name="Hitchcock P."/>
            <person name="Jackson P.J."/>
            <person name="Keim P."/>
            <person name="Kewalramani A.R."/>
            <person name="Longmire J."/>
            <person name="Lucas S."/>
            <person name="Malfatti S."/>
            <person name="Martinez D."/>
            <person name="McMurry K."/>
            <person name="Meincke L.J."/>
            <person name="Misra M."/>
            <person name="Moseman B.L."/>
            <person name="Mundt M."/>
            <person name="Munk A.C."/>
            <person name="Okinaka R.T."/>
            <person name="Parson-Quintana B."/>
            <person name="Reilly L.P."/>
            <person name="Richardson P."/>
            <person name="Robinson D.L."/>
            <person name="Saunders E."/>
            <person name="Tapia R."/>
            <person name="Tesmer J.G."/>
            <person name="Thayer N."/>
            <person name="Thompson L.S."/>
            <person name="Tice H."/>
            <person name="Ticknor L.O."/>
            <person name="Wills P.L."/>
            <person name="Gilna P."/>
            <person name="Brettin T.S."/>
        </authorList>
    </citation>
    <scope>NUCLEOTIDE SEQUENCE [LARGE SCALE GENOMIC DNA]</scope>
    <source>
        <strain>Al Hakam</strain>
    </source>
</reference>
<dbReference type="EMBL" id="CP000485">
    <property type="protein sequence ID" value="ABK83883.1"/>
    <property type="molecule type" value="Genomic_DNA"/>
</dbReference>
<dbReference type="SMR" id="A0R9J0"/>
<dbReference type="KEGG" id="btl:BALH_0490"/>
<dbReference type="HOGENOM" id="CLU_049702_2_0_9"/>
<dbReference type="HAMAP" id="MF_01232">
    <property type="entry name" value="UPF0229"/>
    <property type="match status" value="1"/>
</dbReference>
<dbReference type="InterPro" id="IPR014230">
    <property type="entry name" value="Spore_YhbH"/>
</dbReference>
<dbReference type="InterPro" id="IPR006698">
    <property type="entry name" value="UPF0229"/>
</dbReference>
<dbReference type="NCBIfam" id="TIGR02877">
    <property type="entry name" value="spore_yhbH"/>
    <property type="match status" value="1"/>
</dbReference>
<dbReference type="PANTHER" id="PTHR30510">
    <property type="entry name" value="UPF0229 PROTEIN YEAH"/>
    <property type="match status" value="1"/>
</dbReference>
<dbReference type="PANTHER" id="PTHR30510:SF2">
    <property type="entry name" value="UPF0229 PROTEIN YEAH"/>
    <property type="match status" value="1"/>
</dbReference>
<dbReference type="Pfam" id="PF04285">
    <property type="entry name" value="DUF444"/>
    <property type="match status" value="2"/>
</dbReference>
<comment type="similarity">
    <text evidence="1">Belongs to the UPF0229 family.</text>
</comment>
<protein>
    <recommendedName>
        <fullName evidence="1">UPF0229 protein BALH_0490</fullName>
    </recommendedName>
</protein>
<proteinExistence type="inferred from homology"/>